<dbReference type="EC" id="4.3.3.6" evidence="1"/>
<dbReference type="EMBL" id="AE014295">
    <property type="protein sequence ID" value="AAN24951.1"/>
    <property type="status" value="ALT_INIT"/>
    <property type="molecule type" value="Genomic_DNA"/>
</dbReference>
<dbReference type="RefSeq" id="NP_696315.1">
    <property type="nucleotide sequence ID" value="NC_004307.2"/>
</dbReference>
<dbReference type="RefSeq" id="WP_007053677.1">
    <property type="nucleotide sequence ID" value="NC_004307.2"/>
</dbReference>
<dbReference type="SMR" id="Q8G574"/>
<dbReference type="STRING" id="206672.BL1146"/>
<dbReference type="EnsemblBacteria" id="AAN24951">
    <property type="protein sequence ID" value="AAN24951"/>
    <property type="gene ID" value="BL1146"/>
</dbReference>
<dbReference type="GeneID" id="69577706"/>
<dbReference type="KEGG" id="blo:BL1146"/>
<dbReference type="PATRIC" id="fig|206672.9.peg.856"/>
<dbReference type="HOGENOM" id="CLU_055352_1_0_11"/>
<dbReference type="OrthoDB" id="9772545at2"/>
<dbReference type="UniPathway" id="UPA00245"/>
<dbReference type="Proteomes" id="UP000000439">
    <property type="component" value="Chromosome"/>
</dbReference>
<dbReference type="GO" id="GO:0036381">
    <property type="term" value="F:pyridoxal 5'-phosphate synthase (glutamine hydrolysing) activity"/>
    <property type="evidence" value="ECO:0007669"/>
    <property type="project" value="UniProtKB-UniRule"/>
</dbReference>
<dbReference type="GO" id="GO:0006520">
    <property type="term" value="P:amino acid metabolic process"/>
    <property type="evidence" value="ECO:0007669"/>
    <property type="project" value="TreeGrafter"/>
</dbReference>
<dbReference type="GO" id="GO:0042823">
    <property type="term" value="P:pyridoxal phosphate biosynthetic process"/>
    <property type="evidence" value="ECO:0007669"/>
    <property type="project" value="UniProtKB-UniRule"/>
</dbReference>
<dbReference type="GO" id="GO:0008615">
    <property type="term" value="P:pyridoxine biosynthetic process"/>
    <property type="evidence" value="ECO:0007669"/>
    <property type="project" value="TreeGrafter"/>
</dbReference>
<dbReference type="CDD" id="cd04727">
    <property type="entry name" value="pdxS"/>
    <property type="match status" value="1"/>
</dbReference>
<dbReference type="FunFam" id="3.20.20.70:FF:000001">
    <property type="entry name" value="Pyridoxine biosynthesis protein PDX1"/>
    <property type="match status" value="1"/>
</dbReference>
<dbReference type="Gene3D" id="3.20.20.70">
    <property type="entry name" value="Aldolase class I"/>
    <property type="match status" value="1"/>
</dbReference>
<dbReference type="HAMAP" id="MF_01824">
    <property type="entry name" value="PdxS"/>
    <property type="match status" value="1"/>
</dbReference>
<dbReference type="InterPro" id="IPR013785">
    <property type="entry name" value="Aldolase_TIM"/>
</dbReference>
<dbReference type="InterPro" id="IPR001852">
    <property type="entry name" value="PdxS/SNZ"/>
</dbReference>
<dbReference type="InterPro" id="IPR033755">
    <property type="entry name" value="PdxS/SNZ_N"/>
</dbReference>
<dbReference type="InterPro" id="IPR011060">
    <property type="entry name" value="RibuloseP-bd_barrel"/>
</dbReference>
<dbReference type="NCBIfam" id="NF003215">
    <property type="entry name" value="PRK04180.1"/>
    <property type="match status" value="1"/>
</dbReference>
<dbReference type="NCBIfam" id="TIGR00343">
    <property type="entry name" value="pyridoxal 5'-phosphate synthase lyase subunit PdxS"/>
    <property type="match status" value="1"/>
</dbReference>
<dbReference type="PANTHER" id="PTHR31829">
    <property type="entry name" value="PYRIDOXAL 5'-PHOSPHATE SYNTHASE SUBUNIT SNZ1-RELATED"/>
    <property type="match status" value="1"/>
</dbReference>
<dbReference type="PANTHER" id="PTHR31829:SF0">
    <property type="entry name" value="PYRIDOXAL 5'-PHOSPHATE SYNTHASE SUBUNIT SNZ1-RELATED"/>
    <property type="match status" value="1"/>
</dbReference>
<dbReference type="Pfam" id="PF01680">
    <property type="entry name" value="SOR_SNZ"/>
    <property type="match status" value="1"/>
</dbReference>
<dbReference type="PIRSF" id="PIRSF029271">
    <property type="entry name" value="Pdx1"/>
    <property type="match status" value="1"/>
</dbReference>
<dbReference type="SUPFAM" id="SSF51366">
    <property type="entry name" value="Ribulose-phoshate binding barrel"/>
    <property type="match status" value="1"/>
</dbReference>
<dbReference type="PROSITE" id="PS01235">
    <property type="entry name" value="PDXS_SNZ_1"/>
    <property type="match status" value="1"/>
</dbReference>
<dbReference type="PROSITE" id="PS51129">
    <property type="entry name" value="PDXS_SNZ_2"/>
    <property type="match status" value="1"/>
</dbReference>
<reference key="1">
    <citation type="journal article" date="2002" name="Proc. Natl. Acad. Sci. U.S.A.">
        <title>The genome sequence of Bifidobacterium longum reflects its adaptation to the human gastrointestinal tract.</title>
        <authorList>
            <person name="Schell M.A."/>
            <person name="Karmirantzou M."/>
            <person name="Snel B."/>
            <person name="Vilanova D."/>
            <person name="Berger B."/>
            <person name="Pessi G."/>
            <person name="Zwahlen M.-C."/>
            <person name="Desiere F."/>
            <person name="Bork P."/>
            <person name="Delley M."/>
            <person name="Pridmore R.D."/>
            <person name="Arigoni F."/>
        </authorList>
    </citation>
    <scope>NUCLEOTIDE SEQUENCE [LARGE SCALE GENOMIC DNA]</scope>
    <source>
        <strain>NCC 2705</strain>
    </source>
</reference>
<comment type="function">
    <text evidence="1">Catalyzes the formation of pyridoxal 5'-phosphate from ribose 5-phosphate (RBP), glyceraldehyde 3-phosphate (G3P) and ammonia. The ammonia is provided by the PdxT subunit. Can also use ribulose 5-phosphate and dihydroxyacetone phosphate as substrates, resulting from enzyme-catalyzed isomerization of RBP and G3P, respectively.</text>
</comment>
<comment type="catalytic activity">
    <reaction evidence="1">
        <text>aldehydo-D-ribose 5-phosphate + D-glyceraldehyde 3-phosphate + L-glutamine = pyridoxal 5'-phosphate + L-glutamate + phosphate + 3 H2O + H(+)</text>
        <dbReference type="Rhea" id="RHEA:31507"/>
        <dbReference type="ChEBI" id="CHEBI:15377"/>
        <dbReference type="ChEBI" id="CHEBI:15378"/>
        <dbReference type="ChEBI" id="CHEBI:29985"/>
        <dbReference type="ChEBI" id="CHEBI:43474"/>
        <dbReference type="ChEBI" id="CHEBI:58273"/>
        <dbReference type="ChEBI" id="CHEBI:58359"/>
        <dbReference type="ChEBI" id="CHEBI:59776"/>
        <dbReference type="ChEBI" id="CHEBI:597326"/>
        <dbReference type="EC" id="4.3.3.6"/>
    </reaction>
</comment>
<comment type="pathway">
    <text evidence="1">Cofactor biosynthesis; pyridoxal 5'-phosphate biosynthesis.</text>
</comment>
<comment type="subunit">
    <text evidence="1">In the presence of PdxT, forms a dodecamer of heterodimers.</text>
</comment>
<comment type="similarity">
    <text evidence="1">Belongs to the PdxS/SNZ family.</text>
</comment>
<comment type="sequence caution" evidence="2">
    <conflict type="erroneous initiation">
        <sequence resource="EMBL-CDS" id="AAN24951"/>
    </conflict>
</comment>
<proteinExistence type="inferred from homology"/>
<organism>
    <name type="scientific">Bifidobacterium longum (strain NCC 2705)</name>
    <dbReference type="NCBI Taxonomy" id="206672"/>
    <lineage>
        <taxon>Bacteria</taxon>
        <taxon>Bacillati</taxon>
        <taxon>Actinomycetota</taxon>
        <taxon>Actinomycetes</taxon>
        <taxon>Bifidobacteriales</taxon>
        <taxon>Bifidobacteriaceae</taxon>
        <taxon>Bifidobacterium</taxon>
    </lineage>
</organism>
<name>PDXS_BIFLO</name>
<keyword id="KW-0456">Lyase</keyword>
<keyword id="KW-0663">Pyridoxal phosphate</keyword>
<keyword id="KW-1185">Reference proteome</keyword>
<keyword id="KW-0704">Schiff base</keyword>
<evidence type="ECO:0000255" key="1">
    <source>
        <dbReference type="HAMAP-Rule" id="MF_01824"/>
    </source>
</evidence>
<evidence type="ECO:0000305" key="2"/>
<sequence length="291" mass="31106">MTQNRAELNRNLAQMLKGGVIMDVTTPEQAKIAQDAGACAVMALERIPADIRAAGGVSRMSDPAMIKGIQEAVSIPVMAKVRIGHIAEARILQAIEIDYIDESEVLSPADDVYHIDKNQFDVPFVCGAKNLGEALRRIAEGAAMIRTKGEPGTGDVIQAVRHMRTMNKQIRELVGLRDDEVYEAAKQLAVPYDLAKYVHDNGRLPVVNFAAGGVATPADAALMMELGAEGVFVGSGIFKSGDPAKRAAAIVKATANWQDADLLAKLSENLGEAMVGINEDEIQTIMAARGE</sequence>
<gene>
    <name evidence="1" type="primary">pdxS</name>
    <name type="ordered locus">BL1146</name>
</gene>
<protein>
    <recommendedName>
        <fullName evidence="1">Pyridoxal 5'-phosphate synthase subunit PdxS</fullName>
        <shortName evidence="1">PLP synthase subunit PdxS</shortName>
        <ecNumber evidence="1">4.3.3.6</ecNumber>
    </recommendedName>
    <alternativeName>
        <fullName evidence="1">Pdx1</fullName>
    </alternativeName>
</protein>
<feature type="chain" id="PRO_0000109384" description="Pyridoxal 5'-phosphate synthase subunit PdxS">
    <location>
        <begin position="1"/>
        <end position="291"/>
    </location>
</feature>
<feature type="active site" description="Schiff-base intermediate with D-ribose 5-phosphate" evidence="1">
    <location>
        <position position="80"/>
    </location>
</feature>
<feature type="binding site" evidence="1">
    <location>
        <position position="23"/>
    </location>
    <ligand>
        <name>D-ribose 5-phosphate</name>
        <dbReference type="ChEBI" id="CHEBI:78346"/>
    </ligand>
</feature>
<feature type="binding site" evidence="1">
    <location>
        <position position="152"/>
    </location>
    <ligand>
        <name>D-ribose 5-phosphate</name>
        <dbReference type="ChEBI" id="CHEBI:78346"/>
    </ligand>
</feature>
<feature type="binding site" evidence="1">
    <location>
        <position position="164"/>
    </location>
    <ligand>
        <name>D-glyceraldehyde 3-phosphate</name>
        <dbReference type="ChEBI" id="CHEBI:59776"/>
    </ligand>
</feature>
<feature type="binding site" evidence="1">
    <location>
        <position position="213"/>
    </location>
    <ligand>
        <name>D-ribose 5-phosphate</name>
        <dbReference type="ChEBI" id="CHEBI:78346"/>
    </ligand>
</feature>
<feature type="binding site" evidence="1">
    <location>
        <begin position="234"/>
        <end position="235"/>
    </location>
    <ligand>
        <name>D-ribose 5-phosphate</name>
        <dbReference type="ChEBI" id="CHEBI:78346"/>
    </ligand>
</feature>
<accession>Q8G574</accession>